<evidence type="ECO:0000250" key="1"/>
<evidence type="ECO:0000250" key="2">
    <source>
        <dbReference type="UniProtKB" id="P54763"/>
    </source>
</evidence>
<evidence type="ECO:0000255" key="3"/>
<evidence type="ECO:0000255" key="4">
    <source>
        <dbReference type="PROSITE-ProRule" id="PRU00159"/>
    </source>
</evidence>
<evidence type="ECO:0000255" key="5">
    <source>
        <dbReference type="PROSITE-ProRule" id="PRU00184"/>
    </source>
</evidence>
<evidence type="ECO:0000255" key="6">
    <source>
        <dbReference type="PROSITE-ProRule" id="PRU00316"/>
    </source>
</evidence>
<evidence type="ECO:0000255" key="7">
    <source>
        <dbReference type="PROSITE-ProRule" id="PRU00883"/>
    </source>
</evidence>
<evidence type="ECO:0000255" key="8">
    <source>
        <dbReference type="PROSITE-ProRule" id="PRU10028"/>
    </source>
</evidence>
<evidence type="ECO:0000256" key="9">
    <source>
        <dbReference type="SAM" id="MobiDB-lite"/>
    </source>
</evidence>
<evidence type="ECO:0000269" key="10">
    <source>
    </source>
</evidence>
<evidence type="ECO:0000269" key="11">
    <source>
    </source>
</evidence>
<evidence type="ECO:0000269" key="12">
    <source>
    </source>
</evidence>
<evidence type="ECO:0000269" key="13">
    <source>
    </source>
</evidence>
<evidence type="ECO:0000269" key="14">
    <source>
    </source>
</evidence>
<evidence type="ECO:0000269" key="15">
    <source>
    </source>
</evidence>
<evidence type="ECO:0000269" key="16">
    <source>
    </source>
</evidence>
<evidence type="ECO:0000269" key="17">
    <source>
    </source>
</evidence>
<evidence type="ECO:0000303" key="18">
    <source>
    </source>
</evidence>
<evidence type="ECO:0000303" key="19">
    <source>
    </source>
</evidence>
<evidence type="ECO:0000303" key="20">
    <source>
    </source>
</evidence>
<evidence type="ECO:0000303" key="21">
    <source>
    </source>
</evidence>
<evidence type="ECO:0000303" key="22">
    <source>
    </source>
</evidence>
<evidence type="ECO:0000305" key="23"/>
<evidence type="ECO:0007744" key="24">
    <source>
        <dbReference type="PDB" id="8EBL"/>
    </source>
</evidence>
<evidence type="ECO:0007744" key="25">
    <source>
    </source>
</evidence>
<evidence type="ECO:0007829" key="26">
    <source>
        <dbReference type="PDB" id="1B4F"/>
    </source>
</evidence>
<evidence type="ECO:0007829" key="27">
    <source>
        <dbReference type="PDB" id="2QBX"/>
    </source>
</evidence>
<evidence type="ECO:0007829" key="28">
    <source>
        <dbReference type="PDB" id="3ZFM"/>
    </source>
</evidence>
<evidence type="ECO:0007829" key="29">
    <source>
        <dbReference type="PDB" id="8EBL"/>
    </source>
</evidence>
<accession>P29323</accession>
<accession>O43477</accession>
<accession>Q5T0U6</accession>
<accession>Q5T0U7</accession>
<accession>Q5T0U8</accession>
<proteinExistence type="evidence at protein level"/>
<dbReference type="EC" id="2.7.10.1"/>
<dbReference type="EMBL" id="D31661">
    <property type="protein sequence ID" value="BAA06506.1"/>
    <property type="molecule type" value="mRNA"/>
</dbReference>
<dbReference type="EMBL" id="L41939">
    <property type="protein sequence ID" value="AAA99310.1"/>
    <property type="molecule type" value="mRNA"/>
</dbReference>
<dbReference type="EMBL" id="AF025304">
    <property type="protein sequence ID" value="AAB94602.1"/>
    <property type="molecule type" value="mRNA"/>
</dbReference>
<dbReference type="EMBL" id="AL035704">
    <property type="status" value="NOT_ANNOTATED_CDS"/>
    <property type="molecule type" value="Genomic_DNA"/>
</dbReference>
<dbReference type="EMBL" id="AL158086">
    <property type="status" value="NOT_ANNOTATED_CDS"/>
    <property type="molecule type" value="Genomic_DNA"/>
</dbReference>
<dbReference type="EMBL" id="AL512444">
    <property type="status" value="NOT_ANNOTATED_CDS"/>
    <property type="molecule type" value="Genomic_DNA"/>
</dbReference>
<dbReference type="EMBL" id="L36643">
    <property type="protein sequence ID" value="AAA74244.1"/>
    <property type="molecule type" value="mRNA"/>
</dbReference>
<dbReference type="EMBL" id="D37827">
    <property type="protein sequence ID" value="BAA07073.1"/>
    <property type="molecule type" value="mRNA"/>
</dbReference>
<dbReference type="EMBL" id="D14717">
    <property type="protein sequence ID" value="BAA03537.1"/>
    <property type="molecule type" value="mRNA"/>
</dbReference>
<dbReference type="EMBL" id="X59292">
    <property type="protein sequence ID" value="CAA41981.1"/>
    <property type="molecule type" value="Genomic_DNA"/>
</dbReference>
<dbReference type="CCDS" id="CCDS229.2">
    <molecule id="P29323-2"/>
</dbReference>
<dbReference type="CCDS" id="CCDS230.1">
    <molecule id="P29323-3"/>
</dbReference>
<dbReference type="CCDS" id="CCDS81279.1">
    <molecule id="P29323-1"/>
</dbReference>
<dbReference type="PIR" id="A57174">
    <property type="entry name" value="A57174"/>
</dbReference>
<dbReference type="PIR" id="I78842">
    <property type="entry name" value="I78842"/>
</dbReference>
<dbReference type="RefSeq" id="NP_001296122.1">
    <molecule id="P29323-1"/>
    <property type="nucleotide sequence ID" value="NM_001309193.2"/>
</dbReference>
<dbReference type="RefSeq" id="NP_004433.2">
    <molecule id="P29323-3"/>
    <property type="nucleotide sequence ID" value="NM_004442.7"/>
</dbReference>
<dbReference type="RefSeq" id="NP_059145.2">
    <molecule id="P29323-2"/>
    <property type="nucleotide sequence ID" value="NM_017449.5"/>
</dbReference>
<dbReference type="PDB" id="1B4F">
    <property type="method" value="X-ray"/>
    <property type="resolution" value="1.95 A"/>
    <property type="chains" value="A/B/C/D/E/F/G/H=908-985"/>
</dbReference>
<dbReference type="PDB" id="1F0M">
    <property type="method" value="X-ray"/>
    <property type="resolution" value="2.20 A"/>
    <property type="chains" value="A=908-985"/>
</dbReference>
<dbReference type="PDB" id="2QBX">
    <property type="method" value="X-ray"/>
    <property type="resolution" value="2.30 A"/>
    <property type="chains" value="A/B=20-196"/>
</dbReference>
<dbReference type="PDB" id="3ZFM">
    <property type="method" value="X-ray"/>
    <property type="resolution" value="2.27 A"/>
    <property type="chains" value="A=604-898"/>
</dbReference>
<dbReference type="PDB" id="8EBL">
    <property type="method" value="X-ray"/>
    <property type="resolution" value="1.37 A"/>
    <property type="chains" value="C/D=1042-1055"/>
</dbReference>
<dbReference type="PDBsum" id="1B4F"/>
<dbReference type="PDBsum" id="1F0M"/>
<dbReference type="PDBsum" id="2QBX"/>
<dbReference type="PDBsum" id="3ZFM"/>
<dbReference type="PDBsum" id="8EBL"/>
<dbReference type="BMRB" id="P29323"/>
<dbReference type="SMR" id="P29323"/>
<dbReference type="BioGRID" id="108362">
    <property type="interactions" value="214"/>
</dbReference>
<dbReference type="DIP" id="DIP-1162N"/>
<dbReference type="FunCoup" id="P29323">
    <property type="interactions" value="1062"/>
</dbReference>
<dbReference type="IntAct" id="P29323">
    <property type="interactions" value="150"/>
</dbReference>
<dbReference type="MINT" id="P29323"/>
<dbReference type="STRING" id="9606.ENSP00000383053"/>
<dbReference type="BindingDB" id="P29323"/>
<dbReference type="ChEMBL" id="CHEMBL3290"/>
<dbReference type="DrugBank" id="DB12010">
    <property type="generic name" value="Fostamatinib"/>
</dbReference>
<dbReference type="DrugBank" id="DB12843">
    <property type="generic name" value="Oleandrin"/>
</dbReference>
<dbReference type="DrugBank" id="DB04395">
    <property type="generic name" value="Phosphoaminophosphonic Acid-Adenylate Ester"/>
</dbReference>
<dbReference type="DrugBank" id="DB13930">
    <property type="generic name" value="Ulixertinib"/>
</dbReference>
<dbReference type="DrugCentral" id="P29323"/>
<dbReference type="GuidetoPHARMACOLOGY" id="1831"/>
<dbReference type="GlyCosmos" id="P29323">
    <property type="glycosylation" value="4 sites, No reported glycans"/>
</dbReference>
<dbReference type="GlyGen" id="P29323">
    <property type="glycosylation" value="5 sites, 2 N-linked glycans (2 sites), 1 O-linked glycan (1 site)"/>
</dbReference>
<dbReference type="iPTMnet" id="P29323"/>
<dbReference type="PhosphoSitePlus" id="P29323"/>
<dbReference type="SwissPalm" id="P29323"/>
<dbReference type="BioMuta" id="EPHB2"/>
<dbReference type="DMDM" id="76803654"/>
<dbReference type="CPTAC" id="CPTAC-2786"/>
<dbReference type="CPTAC" id="CPTAC-3205"/>
<dbReference type="jPOST" id="P29323"/>
<dbReference type="MassIVE" id="P29323"/>
<dbReference type="PaxDb" id="9606-ENSP00000363763"/>
<dbReference type="PeptideAtlas" id="P29323"/>
<dbReference type="ProteomicsDB" id="54540">
    <molecule id="P29323-1"/>
</dbReference>
<dbReference type="ProteomicsDB" id="54541">
    <molecule id="P29323-2"/>
</dbReference>
<dbReference type="ProteomicsDB" id="54542">
    <molecule id="P29323-3"/>
</dbReference>
<dbReference type="Pumba" id="P29323"/>
<dbReference type="Antibodypedia" id="30106">
    <property type="antibodies" value="653 antibodies from 41 providers"/>
</dbReference>
<dbReference type="DNASU" id="2048"/>
<dbReference type="Ensembl" id="ENST00000374630.8">
    <molecule id="P29323-2"/>
    <property type="protein sequence ID" value="ENSP00000363761.3"/>
    <property type="gene ID" value="ENSG00000133216.17"/>
</dbReference>
<dbReference type="Ensembl" id="ENST00000374632.7">
    <molecule id="P29323-3"/>
    <property type="protein sequence ID" value="ENSP00000363763.3"/>
    <property type="gene ID" value="ENSG00000133216.17"/>
</dbReference>
<dbReference type="Ensembl" id="ENST00000400191.7">
    <molecule id="P29323-1"/>
    <property type="protein sequence ID" value="ENSP00000383053.3"/>
    <property type="gene ID" value="ENSG00000133216.17"/>
</dbReference>
<dbReference type="GeneID" id="2048"/>
<dbReference type="KEGG" id="hsa:2048"/>
<dbReference type="MANE-Select" id="ENST00000374630.8">
    <molecule id="P29323-2"/>
    <property type="protein sequence ID" value="ENSP00000363761.3"/>
    <property type="RefSeq nucleotide sequence ID" value="NM_017449.5"/>
    <property type="RefSeq protein sequence ID" value="NP_059145.2"/>
</dbReference>
<dbReference type="UCSC" id="uc001bge.4">
    <molecule id="P29323-1"/>
    <property type="organism name" value="human"/>
</dbReference>
<dbReference type="AGR" id="HGNC:3393"/>
<dbReference type="CTD" id="2048"/>
<dbReference type="DisGeNET" id="2048"/>
<dbReference type="GeneCards" id="EPHB2"/>
<dbReference type="HGNC" id="HGNC:3393">
    <property type="gene designation" value="EPHB2"/>
</dbReference>
<dbReference type="HPA" id="ENSG00000133216">
    <property type="expression patterns" value="Tissue enhanced (intestine)"/>
</dbReference>
<dbReference type="MalaCards" id="EPHB2"/>
<dbReference type="MIM" id="176807">
    <property type="type" value="phenotype"/>
</dbReference>
<dbReference type="MIM" id="600997">
    <property type="type" value="gene"/>
</dbReference>
<dbReference type="MIM" id="603688">
    <property type="type" value="phenotype"/>
</dbReference>
<dbReference type="MIM" id="618462">
    <property type="type" value="phenotype"/>
</dbReference>
<dbReference type="neXtProt" id="NX_P29323"/>
<dbReference type="OpenTargets" id="ENSG00000133216"/>
<dbReference type="Orphanet" id="1331">
    <property type="disease" value="Familial prostate cancer"/>
</dbReference>
<dbReference type="PharmGKB" id="PA27825"/>
<dbReference type="VEuPathDB" id="HostDB:ENSG00000133216"/>
<dbReference type="eggNOG" id="KOG0196">
    <property type="taxonomic scope" value="Eukaryota"/>
</dbReference>
<dbReference type="GeneTree" id="ENSGT00940000155503"/>
<dbReference type="InParanoid" id="P29323"/>
<dbReference type="OMA" id="GAINCIC"/>
<dbReference type="OrthoDB" id="4062651at2759"/>
<dbReference type="PAN-GO" id="P29323">
    <property type="GO annotations" value="10 GO annotations based on evolutionary models"/>
</dbReference>
<dbReference type="PhylomeDB" id="P29323"/>
<dbReference type="TreeFam" id="TF315608"/>
<dbReference type="BRENDA" id="2.7.10.1">
    <property type="organism ID" value="2681"/>
</dbReference>
<dbReference type="PathwayCommons" id="P29323"/>
<dbReference type="Reactome" id="R-HSA-2682334">
    <property type="pathway name" value="EPH-Ephrin signaling"/>
</dbReference>
<dbReference type="Reactome" id="R-HSA-373760">
    <property type="pathway name" value="L1CAM interactions"/>
</dbReference>
<dbReference type="Reactome" id="R-HSA-3928662">
    <property type="pathway name" value="EPHB-mediated forward signaling"/>
</dbReference>
<dbReference type="Reactome" id="R-HSA-3928664">
    <property type="pathway name" value="Ephrin signaling"/>
</dbReference>
<dbReference type="Reactome" id="R-HSA-3928665">
    <property type="pathway name" value="EPH-ephrin mediated repulsion of cells"/>
</dbReference>
<dbReference type="SignaLink" id="P29323"/>
<dbReference type="SIGNOR" id="P29323"/>
<dbReference type="BioGRID-ORCS" id="2048">
    <property type="hits" value="11 hits in 1193 CRISPR screens"/>
</dbReference>
<dbReference type="ChiTaRS" id="EPHB2">
    <property type="organism name" value="human"/>
</dbReference>
<dbReference type="EvolutionaryTrace" id="P29323"/>
<dbReference type="GeneWiki" id="EPH_receptor_B2"/>
<dbReference type="GenomeRNAi" id="2048"/>
<dbReference type="Pharos" id="P29323">
    <property type="development level" value="Tchem"/>
</dbReference>
<dbReference type="PRO" id="PR:P29323"/>
<dbReference type="Proteomes" id="UP000005640">
    <property type="component" value="Chromosome 1"/>
</dbReference>
<dbReference type="RNAct" id="P29323">
    <property type="molecule type" value="protein"/>
</dbReference>
<dbReference type="Bgee" id="ENSG00000133216">
    <property type="expression patterns" value="Expressed in ganglionic eminence and 165 other cell types or tissues"/>
</dbReference>
<dbReference type="ExpressionAtlas" id="P29323">
    <property type="expression patterns" value="baseline and differential"/>
</dbReference>
<dbReference type="GO" id="GO:0030424">
    <property type="term" value="C:axon"/>
    <property type="evidence" value="ECO:0000250"/>
    <property type="project" value="UniProtKB"/>
</dbReference>
<dbReference type="GO" id="GO:0009986">
    <property type="term" value="C:cell surface"/>
    <property type="evidence" value="ECO:0007669"/>
    <property type="project" value="Ensembl"/>
</dbReference>
<dbReference type="GO" id="GO:0005829">
    <property type="term" value="C:cytosol"/>
    <property type="evidence" value="ECO:0000304"/>
    <property type="project" value="Reactome"/>
</dbReference>
<dbReference type="GO" id="GO:0030425">
    <property type="term" value="C:dendrite"/>
    <property type="evidence" value="ECO:0000250"/>
    <property type="project" value="UniProtKB"/>
</dbReference>
<dbReference type="GO" id="GO:0043197">
    <property type="term" value="C:dendritic spine"/>
    <property type="evidence" value="ECO:0007669"/>
    <property type="project" value="Ensembl"/>
</dbReference>
<dbReference type="GO" id="GO:0005576">
    <property type="term" value="C:extracellular region"/>
    <property type="evidence" value="ECO:0000304"/>
    <property type="project" value="Reactome"/>
</dbReference>
<dbReference type="GO" id="GO:0098978">
    <property type="term" value="C:glutamatergic synapse"/>
    <property type="evidence" value="ECO:0007669"/>
    <property type="project" value="Ensembl"/>
</dbReference>
<dbReference type="GO" id="GO:0098686">
    <property type="term" value="C:hippocampal mossy fiber to CA3 synapse"/>
    <property type="evidence" value="ECO:0007669"/>
    <property type="project" value="Ensembl"/>
</dbReference>
<dbReference type="GO" id="GO:0043025">
    <property type="term" value="C:neuronal cell body"/>
    <property type="evidence" value="ECO:0007669"/>
    <property type="project" value="Ensembl"/>
</dbReference>
<dbReference type="GO" id="GO:0005654">
    <property type="term" value="C:nucleoplasm"/>
    <property type="evidence" value="ECO:0000314"/>
    <property type="project" value="HPA"/>
</dbReference>
<dbReference type="GO" id="GO:0005886">
    <property type="term" value="C:plasma membrane"/>
    <property type="evidence" value="ECO:0000314"/>
    <property type="project" value="HPA"/>
</dbReference>
<dbReference type="GO" id="GO:0098794">
    <property type="term" value="C:postsynapse"/>
    <property type="evidence" value="ECO:0000304"/>
    <property type="project" value="ARUK-UCL"/>
</dbReference>
<dbReference type="GO" id="GO:0045211">
    <property type="term" value="C:postsynaptic membrane"/>
    <property type="evidence" value="ECO:0007669"/>
    <property type="project" value="Ensembl"/>
</dbReference>
<dbReference type="GO" id="GO:0042734">
    <property type="term" value="C:presynaptic membrane"/>
    <property type="evidence" value="ECO:0007669"/>
    <property type="project" value="Ensembl"/>
</dbReference>
<dbReference type="GO" id="GO:0001540">
    <property type="term" value="F:amyloid-beta binding"/>
    <property type="evidence" value="ECO:0000250"/>
    <property type="project" value="ARUK-UCL"/>
</dbReference>
<dbReference type="GO" id="GO:0005524">
    <property type="term" value="F:ATP binding"/>
    <property type="evidence" value="ECO:0007669"/>
    <property type="project" value="UniProtKB-KW"/>
</dbReference>
<dbReference type="GO" id="GO:0008046">
    <property type="term" value="F:axon guidance receptor activity"/>
    <property type="evidence" value="ECO:0007669"/>
    <property type="project" value="Ensembl"/>
</dbReference>
<dbReference type="GO" id="GO:0042802">
    <property type="term" value="F:identical protein binding"/>
    <property type="evidence" value="ECO:0007669"/>
    <property type="project" value="Ensembl"/>
</dbReference>
<dbReference type="GO" id="GO:0004713">
    <property type="term" value="F:protein tyrosine kinase activity"/>
    <property type="evidence" value="ECO:0000250"/>
    <property type="project" value="UniProtKB"/>
</dbReference>
<dbReference type="GO" id="GO:0044877">
    <property type="term" value="F:protein-containing complex binding"/>
    <property type="evidence" value="ECO:0000250"/>
    <property type="project" value="ARUK-UCL"/>
</dbReference>
<dbReference type="GO" id="GO:0005102">
    <property type="term" value="F:signaling receptor binding"/>
    <property type="evidence" value="ECO:0007669"/>
    <property type="project" value="Ensembl"/>
</dbReference>
<dbReference type="GO" id="GO:0005005">
    <property type="term" value="F:transmembrane-ephrin receptor activity"/>
    <property type="evidence" value="ECO:0000250"/>
    <property type="project" value="UniProtKB"/>
</dbReference>
<dbReference type="GO" id="GO:0001525">
    <property type="term" value="P:angiogenesis"/>
    <property type="evidence" value="ECO:0000250"/>
    <property type="project" value="UniProtKB"/>
</dbReference>
<dbReference type="GO" id="GO:0007411">
    <property type="term" value="P:axon guidance"/>
    <property type="evidence" value="ECO:0000250"/>
    <property type="project" value="UniProtKB"/>
</dbReference>
<dbReference type="GO" id="GO:0007413">
    <property type="term" value="P:axonal fasciculation"/>
    <property type="evidence" value="ECO:0000250"/>
    <property type="project" value="UniProtKB"/>
</dbReference>
<dbReference type="GO" id="GO:0042113">
    <property type="term" value="P:B cell activation"/>
    <property type="evidence" value="ECO:0000315"/>
    <property type="project" value="ARUK-UCL"/>
</dbReference>
<dbReference type="GO" id="GO:0048593">
    <property type="term" value="P:camera-type eye morphogenesis"/>
    <property type="evidence" value="ECO:0007669"/>
    <property type="project" value="Ensembl"/>
</dbReference>
<dbReference type="GO" id="GO:1904646">
    <property type="term" value="P:cellular response to amyloid-beta"/>
    <property type="evidence" value="ECO:0007669"/>
    <property type="project" value="Ensembl"/>
</dbReference>
<dbReference type="GO" id="GO:0071222">
    <property type="term" value="P:cellular response to lipopolysaccharide"/>
    <property type="evidence" value="ECO:0007669"/>
    <property type="project" value="Ensembl"/>
</dbReference>
<dbReference type="GO" id="GO:0021952">
    <property type="term" value="P:central nervous system projection neuron axonogenesis"/>
    <property type="evidence" value="ECO:0007669"/>
    <property type="project" value="Ensembl"/>
</dbReference>
<dbReference type="GO" id="GO:0071679">
    <property type="term" value="P:commissural neuron axon guidance"/>
    <property type="evidence" value="ECO:0000250"/>
    <property type="project" value="UniProtKB"/>
</dbReference>
<dbReference type="GO" id="GO:0022038">
    <property type="term" value="P:corpus callosum development"/>
    <property type="evidence" value="ECO:0000250"/>
    <property type="project" value="UniProtKB"/>
</dbReference>
<dbReference type="GO" id="GO:0060996">
    <property type="term" value="P:dendritic spine development"/>
    <property type="evidence" value="ECO:0000250"/>
    <property type="project" value="UniProtKB"/>
</dbReference>
<dbReference type="GO" id="GO:0060997">
    <property type="term" value="P:dendritic spine morphogenesis"/>
    <property type="evidence" value="ECO:0000250"/>
    <property type="project" value="UniProtKB"/>
</dbReference>
<dbReference type="GO" id="GO:0048013">
    <property type="term" value="P:ephrin receptor signaling pathway"/>
    <property type="evidence" value="ECO:0000250"/>
    <property type="project" value="UniProtKB"/>
</dbReference>
<dbReference type="GO" id="GO:0021934">
    <property type="term" value="P:hindbrain tangential cell migration"/>
    <property type="evidence" value="ECO:0007669"/>
    <property type="project" value="Ensembl"/>
</dbReference>
<dbReference type="GO" id="GO:0042472">
    <property type="term" value="P:inner ear morphogenesis"/>
    <property type="evidence" value="ECO:0000250"/>
    <property type="project" value="UniProtKB"/>
</dbReference>
<dbReference type="GO" id="GO:0007612">
    <property type="term" value="P:learning"/>
    <property type="evidence" value="ECO:0000250"/>
    <property type="project" value="ARUK-UCL"/>
</dbReference>
<dbReference type="GO" id="GO:0007611">
    <property type="term" value="P:learning or memory"/>
    <property type="evidence" value="ECO:0000250"/>
    <property type="project" value="ARUK-UCL"/>
</dbReference>
<dbReference type="GO" id="GO:0050771">
    <property type="term" value="P:negative regulation of axonogenesis"/>
    <property type="evidence" value="ECO:0007669"/>
    <property type="project" value="Ensembl"/>
</dbReference>
<dbReference type="GO" id="GO:0007162">
    <property type="term" value="P:negative regulation of cell adhesion"/>
    <property type="evidence" value="ECO:0000315"/>
    <property type="project" value="ARUK-UCL"/>
</dbReference>
<dbReference type="GO" id="GO:1900016">
    <property type="term" value="P:negative regulation of cytokine production involved in inflammatory response"/>
    <property type="evidence" value="ECO:0007669"/>
    <property type="project" value="Ensembl"/>
</dbReference>
<dbReference type="GO" id="GO:0070373">
    <property type="term" value="P:negative regulation of ERK1 and ERK2 cascade"/>
    <property type="evidence" value="ECO:0000250"/>
    <property type="project" value="ARUK-UCL"/>
</dbReference>
<dbReference type="GO" id="GO:1900450">
    <property type="term" value="P:negative regulation of glutamate receptor signaling pathway"/>
    <property type="evidence" value="ECO:0000250"/>
    <property type="project" value="ARUK-UCL"/>
</dbReference>
<dbReference type="GO" id="GO:0046580">
    <property type="term" value="P:negative regulation of Ras protein signal transduction"/>
    <property type="evidence" value="ECO:0000250"/>
    <property type="project" value="ARUK-UCL"/>
</dbReference>
<dbReference type="GO" id="GO:0007399">
    <property type="term" value="P:nervous system development"/>
    <property type="evidence" value="ECO:0000304"/>
    <property type="project" value="UniProtKB"/>
</dbReference>
<dbReference type="GO" id="GO:1990535">
    <property type="term" value="P:neuron projection maintenance"/>
    <property type="evidence" value="ECO:0000250"/>
    <property type="project" value="ARUK-UCL"/>
</dbReference>
<dbReference type="GO" id="GO:0106028">
    <property type="term" value="P:neuron projection retraction"/>
    <property type="evidence" value="ECO:0000250"/>
    <property type="project" value="ARUK-UCL"/>
</dbReference>
<dbReference type="GO" id="GO:0021631">
    <property type="term" value="P:optic nerve morphogenesis"/>
    <property type="evidence" value="ECO:0007669"/>
    <property type="project" value="Ensembl"/>
</dbReference>
<dbReference type="GO" id="GO:0018108">
    <property type="term" value="P:peptidyl-tyrosine phosphorylation"/>
    <property type="evidence" value="ECO:0000250"/>
    <property type="project" value="UniProtKB"/>
</dbReference>
<dbReference type="GO" id="GO:0016310">
    <property type="term" value="P:phosphorylation"/>
    <property type="evidence" value="ECO:0000250"/>
    <property type="project" value="UniProtKB"/>
</dbReference>
<dbReference type="GO" id="GO:0030890">
    <property type="term" value="P:positive regulation of B cell proliferation"/>
    <property type="evidence" value="ECO:0000315"/>
    <property type="project" value="ARUK-UCL"/>
</dbReference>
<dbReference type="GO" id="GO:0030335">
    <property type="term" value="P:positive regulation of cell migration"/>
    <property type="evidence" value="ECO:0000316"/>
    <property type="project" value="ARUK-UCL"/>
</dbReference>
<dbReference type="GO" id="GO:0061003">
    <property type="term" value="P:positive regulation of dendritic spine morphogenesis"/>
    <property type="evidence" value="ECO:0007669"/>
    <property type="project" value="Ensembl"/>
</dbReference>
<dbReference type="GO" id="GO:0010628">
    <property type="term" value="P:positive regulation of gene expression"/>
    <property type="evidence" value="ECO:0000250"/>
    <property type="project" value="ARUK-UCL"/>
</dbReference>
<dbReference type="GO" id="GO:1900451">
    <property type="term" value="P:positive regulation of glutamate receptor signaling pathway"/>
    <property type="evidence" value="ECO:0000250"/>
    <property type="project" value="ARUK-UCL"/>
</dbReference>
<dbReference type="GO" id="GO:0002639">
    <property type="term" value="P:positive regulation of immunoglobulin production"/>
    <property type="evidence" value="ECO:0000315"/>
    <property type="project" value="ARUK-UCL"/>
</dbReference>
<dbReference type="GO" id="GO:0048170">
    <property type="term" value="P:positive regulation of long-term neuronal synaptic plasticity"/>
    <property type="evidence" value="ECO:0007669"/>
    <property type="project" value="Ensembl"/>
</dbReference>
<dbReference type="GO" id="GO:1900273">
    <property type="term" value="P:positive regulation of long-term synaptic potentiation"/>
    <property type="evidence" value="ECO:0000250"/>
    <property type="project" value="ARUK-UCL"/>
</dbReference>
<dbReference type="GO" id="GO:2000010">
    <property type="term" value="P:positive regulation of protein localization to cell surface"/>
    <property type="evidence" value="ECO:0007669"/>
    <property type="project" value="Ensembl"/>
</dbReference>
<dbReference type="GO" id="GO:1903078">
    <property type="term" value="P:positive regulation of protein localization to plasma membrane"/>
    <property type="evidence" value="ECO:0000250"/>
    <property type="project" value="ARUK-UCL"/>
</dbReference>
<dbReference type="GO" id="GO:0051965">
    <property type="term" value="P:positive regulation of synapse assembly"/>
    <property type="evidence" value="ECO:0000250"/>
    <property type="project" value="UniProtKB"/>
</dbReference>
<dbReference type="GO" id="GO:0031915">
    <property type="term" value="P:positive regulation of synaptic plasticity"/>
    <property type="evidence" value="ECO:0000250"/>
    <property type="project" value="ARUK-UCL"/>
</dbReference>
<dbReference type="GO" id="GO:0032760">
    <property type="term" value="P:positive regulation of tumor necrosis factor production"/>
    <property type="evidence" value="ECO:0000315"/>
    <property type="project" value="ARUK-UCL"/>
</dbReference>
<dbReference type="GO" id="GO:0097104">
    <property type="term" value="P:postsynaptic membrane assembly"/>
    <property type="evidence" value="ECO:0007669"/>
    <property type="project" value="Ensembl"/>
</dbReference>
<dbReference type="GO" id="GO:2000785">
    <property type="term" value="P:regulation of autophagosome assembly"/>
    <property type="evidence" value="ECO:0000314"/>
    <property type="project" value="UniProt"/>
</dbReference>
<dbReference type="GO" id="GO:2000822">
    <property type="term" value="P:regulation of behavioral fear response"/>
    <property type="evidence" value="ECO:0007669"/>
    <property type="project" value="Ensembl"/>
</dbReference>
<dbReference type="GO" id="GO:0030193">
    <property type="term" value="P:regulation of blood coagulation"/>
    <property type="evidence" value="ECO:0000315"/>
    <property type="project" value="UniProtKB"/>
</dbReference>
<dbReference type="GO" id="GO:0050878">
    <property type="term" value="P:regulation of body fluid levels"/>
    <property type="evidence" value="ECO:0000250"/>
    <property type="project" value="UniProtKB"/>
</dbReference>
<dbReference type="GO" id="GO:0051489">
    <property type="term" value="P:regulation of filopodium assembly"/>
    <property type="evidence" value="ECO:0007669"/>
    <property type="project" value="Ensembl"/>
</dbReference>
<dbReference type="GO" id="GO:0048168">
    <property type="term" value="P:regulation of neuronal synaptic plasticity"/>
    <property type="evidence" value="ECO:0000250"/>
    <property type="project" value="ARUK-UCL"/>
</dbReference>
<dbReference type="GO" id="GO:0046425">
    <property type="term" value="P:regulation of receptor signaling pathway via JAK-STAT"/>
    <property type="evidence" value="ECO:0007669"/>
    <property type="project" value="Ensembl"/>
</dbReference>
<dbReference type="GO" id="GO:2000316">
    <property type="term" value="P:regulation of T-helper 17 type immune response"/>
    <property type="evidence" value="ECO:0007669"/>
    <property type="project" value="Ensembl"/>
</dbReference>
<dbReference type="GO" id="GO:0031290">
    <property type="term" value="P:retinal ganglion cell axon guidance"/>
    <property type="evidence" value="ECO:0007669"/>
    <property type="project" value="Ensembl"/>
</dbReference>
<dbReference type="GO" id="GO:0060021">
    <property type="term" value="P:roof of mouth development"/>
    <property type="evidence" value="ECO:0000250"/>
    <property type="project" value="UniProtKB"/>
</dbReference>
<dbReference type="GO" id="GO:0120192">
    <property type="term" value="P:tight junction assembly"/>
    <property type="evidence" value="ECO:0007669"/>
    <property type="project" value="Ensembl"/>
</dbReference>
<dbReference type="GO" id="GO:0001655">
    <property type="term" value="P:urogenital system development"/>
    <property type="evidence" value="ECO:0000250"/>
    <property type="project" value="UniProtKB"/>
</dbReference>
<dbReference type="GO" id="GO:0110077">
    <property type="term" value="P:vesicle-mediated intercellular transport"/>
    <property type="evidence" value="ECO:0007669"/>
    <property type="project" value="Ensembl"/>
</dbReference>
<dbReference type="CDD" id="cd10477">
    <property type="entry name" value="EphR_LBD_B2"/>
    <property type="match status" value="1"/>
</dbReference>
<dbReference type="CDD" id="cd00063">
    <property type="entry name" value="FN3"/>
    <property type="match status" value="2"/>
</dbReference>
<dbReference type="CDD" id="cd05065">
    <property type="entry name" value="PTKc_EphR_B"/>
    <property type="match status" value="1"/>
</dbReference>
<dbReference type="CDD" id="cd09552">
    <property type="entry name" value="SAM_EPH-B2"/>
    <property type="match status" value="1"/>
</dbReference>
<dbReference type="CDD" id="cd00185">
    <property type="entry name" value="TNFRSF"/>
    <property type="match status" value="1"/>
</dbReference>
<dbReference type="FunFam" id="1.10.150.50:FF:000099">
    <property type="entry name" value="EPH receptor B2"/>
    <property type="match status" value="1"/>
</dbReference>
<dbReference type="FunFam" id="2.60.40.10:FF:000041">
    <property type="entry name" value="ephrin type-A receptor 3"/>
    <property type="match status" value="1"/>
</dbReference>
<dbReference type="FunFam" id="2.10.50.10:FF:000001">
    <property type="entry name" value="Ephrin type-A receptor 5"/>
    <property type="match status" value="1"/>
</dbReference>
<dbReference type="FunFam" id="2.60.40.1770:FF:000001">
    <property type="entry name" value="Ephrin type-A receptor 5"/>
    <property type="match status" value="1"/>
</dbReference>
<dbReference type="FunFam" id="3.30.200.20:FF:000001">
    <property type="entry name" value="Ephrin type-A receptor 5"/>
    <property type="match status" value="1"/>
</dbReference>
<dbReference type="FunFam" id="1.10.510.10:FF:000015">
    <property type="entry name" value="Ephrin type-B receptor 2"/>
    <property type="match status" value="1"/>
</dbReference>
<dbReference type="FunFam" id="2.60.120.260:FF:000004">
    <property type="entry name" value="Ephrin type-B receptor 2"/>
    <property type="match status" value="1"/>
</dbReference>
<dbReference type="FunFam" id="2.60.40.10:FF:000110">
    <property type="entry name" value="Ephrin type-B receptor 2"/>
    <property type="match status" value="1"/>
</dbReference>
<dbReference type="Gene3D" id="2.60.40.1770">
    <property type="entry name" value="ephrin a2 ectodomain"/>
    <property type="match status" value="1"/>
</dbReference>
<dbReference type="Gene3D" id="2.60.120.260">
    <property type="entry name" value="Galactose-binding domain-like"/>
    <property type="match status" value="1"/>
</dbReference>
<dbReference type="Gene3D" id="2.60.40.10">
    <property type="entry name" value="Immunoglobulins"/>
    <property type="match status" value="2"/>
</dbReference>
<dbReference type="Gene3D" id="3.30.200.20">
    <property type="entry name" value="Phosphorylase Kinase, domain 1"/>
    <property type="match status" value="1"/>
</dbReference>
<dbReference type="Gene3D" id="1.10.150.50">
    <property type="entry name" value="Transcription Factor, Ets-1"/>
    <property type="match status" value="1"/>
</dbReference>
<dbReference type="Gene3D" id="1.10.510.10">
    <property type="entry name" value="Transferase(Phosphotransferase) domain 1"/>
    <property type="match status" value="1"/>
</dbReference>
<dbReference type="Gene3D" id="2.10.50.10">
    <property type="entry name" value="Tumor Necrosis Factor Receptor, subunit A, domain 2"/>
    <property type="match status" value="1"/>
</dbReference>
<dbReference type="InterPro" id="IPR027936">
    <property type="entry name" value="Eph_TM"/>
</dbReference>
<dbReference type="InterPro" id="IPR034238">
    <property type="entry name" value="EphB2_rcpt_lig-bd"/>
</dbReference>
<dbReference type="InterPro" id="IPR001090">
    <property type="entry name" value="Ephrin_rcpt_lig-bd_dom"/>
</dbReference>
<dbReference type="InterPro" id="IPR050449">
    <property type="entry name" value="Ephrin_rcpt_TKs"/>
</dbReference>
<dbReference type="InterPro" id="IPR003961">
    <property type="entry name" value="FN3_dom"/>
</dbReference>
<dbReference type="InterPro" id="IPR036116">
    <property type="entry name" value="FN3_sf"/>
</dbReference>
<dbReference type="InterPro" id="IPR008979">
    <property type="entry name" value="Galactose-bd-like_sf"/>
</dbReference>
<dbReference type="InterPro" id="IPR009030">
    <property type="entry name" value="Growth_fac_rcpt_cys_sf"/>
</dbReference>
<dbReference type="InterPro" id="IPR013783">
    <property type="entry name" value="Ig-like_fold"/>
</dbReference>
<dbReference type="InterPro" id="IPR011009">
    <property type="entry name" value="Kinase-like_dom_sf"/>
</dbReference>
<dbReference type="InterPro" id="IPR000719">
    <property type="entry name" value="Prot_kinase_dom"/>
</dbReference>
<dbReference type="InterPro" id="IPR017441">
    <property type="entry name" value="Protein_kinase_ATP_BS"/>
</dbReference>
<dbReference type="InterPro" id="IPR001660">
    <property type="entry name" value="SAM"/>
</dbReference>
<dbReference type="InterPro" id="IPR013761">
    <property type="entry name" value="SAM/pointed_sf"/>
</dbReference>
<dbReference type="InterPro" id="IPR001245">
    <property type="entry name" value="Ser-Thr/Tyr_kinase_cat_dom"/>
</dbReference>
<dbReference type="InterPro" id="IPR011641">
    <property type="entry name" value="Tyr-kin_ephrin_A/B_rcpt-like"/>
</dbReference>
<dbReference type="InterPro" id="IPR008266">
    <property type="entry name" value="Tyr_kinase_AS"/>
</dbReference>
<dbReference type="InterPro" id="IPR020635">
    <property type="entry name" value="Tyr_kinase_cat_dom"/>
</dbReference>
<dbReference type="InterPro" id="IPR016257">
    <property type="entry name" value="Tyr_kinase_ephrin_rcpt"/>
</dbReference>
<dbReference type="InterPro" id="IPR001426">
    <property type="entry name" value="Tyr_kinase_rcpt_V_CS"/>
</dbReference>
<dbReference type="PANTHER" id="PTHR46877">
    <property type="entry name" value="EPH RECEPTOR A5"/>
    <property type="match status" value="1"/>
</dbReference>
<dbReference type="PANTHER" id="PTHR46877:SF11">
    <property type="entry name" value="EPHRIN TYPE-B RECEPTOR 2"/>
    <property type="match status" value="1"/>
</dbReference>
<dbReference type="Pfam" id="PF14575">
    <property type="entry name" value="EphA2_TM"/>
    <property type="match status" value="1"/>
</dbReference>
<dbReference type="Pfam" id="PF01404">
    <property type="entry name" value="Ephrin_lbd"/>
    <property type="match status" value="1"/>
</dbReference>
<dbReference type="Pfam" id="PF07699">
    <property type="entry name" value="Ephrin_rec_like"/>
    <property type="match status" value="1"/>
</dbReference>
<dbReference type="Pfam" id="PF00041">
    <property type="entry name" value="fn3"/>
    <property type="match status" value="2"/>
</dbReference>
<dbReference type="Pfam" id="PF07714">
    <property type="entry name" value="PK_Tyr_Ser-Thr"/>
    <property type="match status" value="1"/>
</dbReference>
<dbReference type="Pfam" id="PF00536">
    <property type="entry name" value="SAM_1"/>
    <property type="match status" value="1"/>
</dbReference>
<dbReference type="PIRSF" id="PIRSF000666">
    <property type="entry name" value="TyrPK_ephrin_receptor"/>
    <property type="match status" value="1"/>
</dbReference>
<dbReference type="PRINTS" id="PR00014">
    <property type="entry name" value="FNTYPEIII"/>
</dbReference>
<dbReference type="PRINTS" id="PR00109">
    <property type="entry name" value="TYRKINASE"/>
</dbReference>
<dbReference type="SMART" id="SM00615">
    <property type="entry name" value="EPH_lbd"/>
    <property type="match status" value="1"/>
</dbReference>
<dbReference type="SMART" id="SM01411">
    <property type="entry name" value="Ephrin_rec_like"/>
    <property type="match status" value="1"/>
</dbReference>
<dbReference type="SMART" id="SM00060">
    <property type="entry name" value="FN3"/>
    <property type="match status" value="2"/>
</dbReference>
<dbReference type="SMART" id="SM00454">
    <property type="entry name" value="SAM"/>
    <property type="match status" value="1"/>
</dbReference>
<dbReference type="SMART" id="SM00219">
    <property type="entry name" value="TyrKc"/>
    <property type="match status" value="1"/>
</dbReference>
<dbReference type="SUPFAM" id="SSF49265">
    <property type="entry name" value="Fibronectin type III"/>
    <property type="match status" value="1"/>
</dbReference>
<dbReference type="SUPFAM" id="SSF49785">
    <property type="entry name" value="Galactose-binding domain-like"/>
    <property type="match status" value="1"/>
</dbReference>
<dbReference type="SUPFAM" id="SSF57184">
    <property type="entry name" value="Growth factor receptor domain"/>
    <property type="match status" value="1"/>
</dbReference>
<dbReference type="SUPFAM" id="SSF56112">
    <property type="entry name" value="Protein kinase-like (PK-like)"/>
    <property type="match status" value="1"/>
</dbReference>
<dbReference type="SUPFAM" id="SSF47769">
    <property type="entry name" value="SAM/Pointed domain"/>
    <property type="match status" value="1"/>
</dbReference>
<dbReference type="PROSITE" id="PS51550">
    <property type="entry name" value="EPH_LBD"/>
    <property type="match status" value="1"/>
</dbReference>
<dbReference type="PROSITE" id="PS50853">
    <property type="entry name" value="FN3"/>
    <property type="match status" value="2"/>
</dbReference>
<dbReference type="PROSITE" id="PS00107">
    <property type="entry name" value="PROTEIN_KINASE_ATP"/>
    <property type="match status" value="1"/>
</dbReference>
<dbReference type="PROSITE" id="PS50011">
    <property type="entry name" value="PROTEIN_KINASE_DOM"/>
    <property type="match status" value="1"/>
</dbReference>
<dbReference type="PROSITE" id="PS00109">
    <property type="entry name" value="PROTEIN_KINASE_TYR"/>
    <property type="match status" value="1"/>
</dbReference>
<dbReference type="PROSITE" id="PS00790">
    <property type="entry name" value="RECEPTOR_TYR_KIN_V_1"/>
    <property type="match status" value="1"/>
</dbReference>
<dbReference type="PROSITE" id="PS00791">
    <property type="entry name" value="RECEPTOR_TYR_KIN_V_2"/>
    <property type="match status" value="1"/>
</dbReference>
<dbReference type="PROSITE" id="PS50105">
    <property type="entry name" value="SAM_DOMAIN"/>
    <property type="match status" value="1"/>
</dbReference>
<comment type="function">
    <text evidence="10 15">Receptor tyrosine kinase which binds promiscuously transmembrane ephrin-B family ligands residing on adjacent cells, leading to contact-dependent bidirectional signaling into neighboring cells. The signaling pathway downstream of the receptor is referred to as forward signaling while the signaling pathway downstream of the ephrin ligand is referred to as reverse signaling. Functions in axon guidance during development. Involved in the guidance of commissural axons, that form a major interhemispheric connection between the 2 temporal lobes of the cerebral cortex. Also involved in guidance of contralateral inner ear efferent growth cones at the midline and of retinal ganglion cell axons to the optic disk. In addition to axon guidance, also regulates dendritic spines development and maturation and stimulates the formation of excitatory synapses. Upon activation by EFNB1, abolishes the ARHGEF15-mediated negative regulation on excitatory synapse formation. Controls other aspects of development including angiogenesis, palate development and in inner ear development through regulation of endolymph production. Forward and reverse signaling through the EFNB2/EPHB2 complex regulate movement and adhesion of cells that tubularize the urethra and septate the cloaca. May function as a tumor suppressor. May be involved in the regulation of platelet activation and blood coagulation (PubMed:30213874).</text>
</comment>
<comment type="catalytic activity">
    <reaction evidence="8">
        <text>L-tyrosyl-[protein] + ATP = O-phospho-L-tyrosyl-[protein] + ADP + H(+)</text>
        <dbReference type="Rhea" id="RHEA:10596"/>
        <dbReference type="Rhea" id="RHEA-COMP:10136"/>
        <dbReference type="Rhea" id="RHEA-COMP:20101"/>
        <dbReference type="ChEBI" id="CHEBI:15378"/>
        <dbReference type="ChEBI" id="CHEBI:30616"/>
        <dbReference type="ChEBI" id="CHEBI:46858"/>
        <dbReference type="ChEBI" id="CHEBI:61978"/>
        <dbReference type="ChEBI" id="CHEBI:456216"/>
        <dbReference type="EC" id="2.7.10.1"/>
    </reaction>
</comment>
<comment type="subunit">
    <text evidence="2 13 14">Heterotetramer upon binding of the ligand (By similarity). The heterotetramer is composed of an ephrin dimer and a receptor dimer (PubMed:17897949). Interacts (via PDZ-binding motif) with GRIP1 and PICK1 (via PDZ domain) (By similarity). Interacts with ARHGEF15; mediates ARHGEF15 phosphorylation, ubiquitination and degradation by the proteasome (By similarity). Interacts with AQP1; involved in endolymph production in the inner ear (By similarity). Interacts with SPSB1 and SPSB4 (PubMed:28931592). The phosphorylated form interacts with RASA1 (via SH2 domain 1) (By similarity). Interacts with EFNA5 (By similarity). Interacts with SH2D3C (By similarity).</text>
</comment>
<comment type="interaction">
    <interactant intactId="EBI-1059294">
        <id>P29323</id>
    </interactant>
    <interactant intactId="EBI-2835440">
        <id>P07333</id>
        <label>CSF1R</label>
    </interactant>
    <organismsDiffer>false</organismsDiffer>
    <experiments>2</experiments>
</comment>
<comment type="interaction">
    <interactant intactId="EBI-1059294">
        <id>P29323</id>
    </interactant>
    <interactant intactId="EBI-5773557">
        <id>P54764</id>
        <label>EPHA4</label>
    </interactant>
    <organismsDiffer>false</organismsDiffer>
    <experiments>3</experiments>
</comment>
<comment type="interaction">
    <interactant intactId="EBI-1059294">
        <id>P29323</id>
    </interactant>
    <interactant intactId="EBI-1383428">
        <id>Q15375</id>
        <label>EPHA7</label>
    </interactant>
    <organismsDiffer>false</organismsDiffer>
    <experiments>2</experiments>
</comment>
<comment type="interaction">
    <interactant intactId="EBI-1059294">
        <id>P29323</id>
    </interactant>
    <interactant intactId="EBI-286779">
        <id>P49790</id>
        <label>NUP153</label>
    </interactant>
    <organismsDiffer>false</organismsDiffer>
    <experiments>2</experiments>
</comment>
<comment type="interaction">
    <interactant intactId="EBI-25838727">
        <id>P29323-3</id>
    </interactant>
    <interactant intactId="EBI-6165897">
        <id>Q9NWW5</id>
        <label>CLN6</label>
    </interactant>
    <organismsDiffer>false</organismsDiffer>
    <experiments>3</experiments>
</comment>
<comment type="interaction">
    <interactant intactId="EBI-25838727">
        <id>P29323-3</id>
    </interactant>
    <interactant intactId="EBI-10200977">
        <id>P21964-2</id>
        <label>COMT</label>
    </interactant>
    <organismsDiffer>false</organismsDiffer>
    <experiments>3</experiments>
</comment>
<comment type="interaction">
    <interactant intactId="EBI-25838727">
        <id>P29323-3</id>
    </interactant>
    <interactant intactId="EBI-1055254">
        <id>Q8WXH2</id>
        <label>JPH3</label>
    </interactant>
    <organismsDiffer>false</organismsDiffer>
    <experiments>3</experiments>
</comment>
<comment type="interaction">
    <interactant intactId="EBI-25838727">
        <id>P29323-3</id>
    </interactant>
    <interactant intactId="EBI-721853">
        <id>O14832</id>
        <label>PHYH</label>
    </interactant>
    <organismsDiffer>false</organismsDiffer>
    <experiments>3</experiments>
</comment>
<comment type="interaction">
    <interactant intactId="EBI-25838727">
        <id>P29323-3</id>
    </interactant>
    <interactant intactId="EBI-5235340">
        <id>Q7Z699</id>
        <label>SPRED1</label>
    </interactant>
    <organismsDiffer>false</organismsDiffer>
    <experiments>3</experiments>
</comment>
<comment type="interaction">
    <interactant intactId="EBI-25838727">
        <id>P29323-3</id>
    </interactant>
    <interactant intactId="EBI-372899">
        <id>Q13148</id>
        <label>TARDBP</label>
    </interactant>
    <organismsDiffer>false</organismsDiffer>
    <experiments>6</experiments>
</comment>
<comment type="subcellular location">
    <subcellularLocation>
        <location>Cell membrane</location>
        <topology>Single-pass type I membrane protein</topology>
    </subcellularLocation>
    <subcellularLocation>
        <location evidence="1">Cell projection</location>
        <location evidence="1">Axon</location>
    </subcellularLocation>
    <subcellularLocation>
        <location evidence="1">Cell projection</location>
        <location evidence="1">Dendrite</location>
    </subcellularLocation>
</comment>
<comment type="alternative products">
    <event type="alternative splicing"/>
    <isoform>
        <id>P29323-1</id>
        <name>1</name>
        <name>EPHB2v</name>
        <name>Long</name>
        <sequence type="displayed"/>
    </isoform>
    <isoform>
        <id>P29323-2</id>
        <name>2</name>
        <name>Short</name>
        <sequence type="described" ref="VSP_003016 VSP_003017"/>
    </isoform>
    <isoform>
        <id>P29323-3</id>
        <name>3</name>
        <sequence type="described" ref="VSP_015713 VSP_003016 VSP_003017"/>
    </isoform>
</comment>
<comment type="tissue specificity">
    <text>Brain, heart, lung, kidney, placenta, pancreas, liver and skeletal muscle. Preferentially expressed in fetal brain.</text>
</comment>
<comment type="PTM">
    <text evidence="2">Autophosphorylated; ligand binding stimulates autophosphorylation on tyrosine residues.</text>
</comment>
<comment type="PTM">
    <text evidence="14 16 17">Polyubiquitinated; ligand binding stimulates ubiquitination (PubMed:28931592). Ubiquitinated by RNF186 at Lys-891, mainly through 'Lys-27'-linked polyubiquitin chains (PubMed:33280498). Ubiquitinated by CRL2(KLHDC2) E3 ligase complex (PubMed:36805027).</text>
</comment>
<comment type="PTM">
    <text evidence="2">Ligand binding induces cleavage by matrix metalloproteinases (MMPs) such as MMP7/MMP9, producing an EphB2/N-terminal fragment (NTF) and a C-terminal long fragment (EphB2-LF). EphB2-LF is further cleaved by MMPs, producing EphB2/CTF1 which is further cleaved by the PS1/gamma-secretase producing EphB2/CTF2.</text>
</comment>
<comment type="disease" evidence="10 11">
    <disease id="DI-02663">
        <name>Prostate cancer</name>
        <acronym>PC</acronym>
        <description>A malignancy originating in tissues of the prostate. Most prostate cancers are adenocarcinomas that develop in the acini of the prostatic ducts. Other rare histopathologic types of prostate cancer that occur in approximately 5% of patients include small cell carcinoma, mucinous carcinoma, prostatic ductal carcinoma, transitional cell carcinoma, squamous cell carcinoma, basal cell carcinoma, adenoid cystic carcinoma (basaloid), signet-ring cell carcinoma and neuroendocrine carcinoma.</description>
        <dbReference type="MIM" id="176807"/>
    </disease>
    <text>The gene represented in this entry may be involved in disease pathogenesis. EPHB2 mutations have been found in a prostate cancer cell line derived from a brain metastasis.</text>
</comment>
<comment type="disease" evidence="15">
    <disease id="DI-05589">
        <name>Bleeding disorder, platelet-type, 22</name>
        <acronym>BDPLT22</acronym>
        <description>An autosomal recessive disorder characterized by increased bleeding tendency due to platelet dysfunction. Clinical features include epistaxis, hematomas, bleeding after minor injuries, and menorrhagia.</description>
        <dbReference type="MIM" id="618462"/>
    </disease>
    <text>The disease may be caused by variants affecting the gene represented in this entry.</text>
</comment>
<comment type="similarity">
    <text evidence="4">Belongs to the protein kinase superfamily. Tyr protein kinase family. Ephrin receptor subfamily.</text>
</comment>
<feature type="signal peptide" evidence="3">
    <location>
        <begin position="1"/>
        <end position="18"/>
    </location>
</feature>
<feature type="chain" id="PRO_0000016827" description="Ephrin type-B receptor 2">
    <location>
        <begin position="19"/>
        <end position="1055"/>
    </location>
</feature>
<feature type="chain" id="PRO_0000445961" description="EphB2/CTF1" evidence="2">
    <location>
        <begin position="536"/>
        <end position="986"/>
    </location>
</feature>
<feature type="chain" id="PRO_0000445962" description="EphB2/CTF2" evidence="2">
    <location>
        <begin position="562"/>
        <end position="986"/>
    </location>
</feature>
<feature type="topological domain" description="Extracellular" evidence="3">
    <location>
        <begin position="19"/>
        <end position="543"/>
    </location>
</feature>
<feature type="transmembrane region" description="Helical" evidence="3">
    <location>
        <begin position="544"/>
        <end position="564"/>
    </location>
</feature>
<feature type="topological domain" description="Cytoplasmic" evidence="3">
    <location>
        <begin position="565"/>
        <end position="1055"/>
    </location>
</feature>
<feature type="domain" description="Eph LBD" evidence="7">
    <location>
        <begin position="20"/>
        <end position="202"/>
    </location>
</feature>
<feature type="domain" description="Fibronectin type-III 1" evidence="6">
    <location>
        <begin position="324"/>
        <end position="434"/>
    </location>
</feature>
<feature type="domain" description="Fibronectin type-III 2" evidence="6">
    <location>
        <begin position="435"/>
        <end position="530"/>
    </location>
</feature>
<feature type="domain" description="Protein kinase" evidence="4">
    <location>
        <begin position="621"/>
        <end position="884"/>
    </location>
</feature>
<feature type="domain" description="SAM" evidence="5">
    <location>
        <begin position="913"/>
        <end position="977"/>
    </location>
</feature>
<feature type="region of interest" description="Disordered" evidence="9">
    <location>
        <begin position="990"/>
        <end position="1055"/>
    </location>
</feature>
<feature type="short sequence motif" description="PDZ-binding (in isoform 2)" evidence="3">
    <location>
        <begin position="984"/>
        <end position="986"/>
    </location>
</feature>
<feature type="compositionally biased region" description="Basic residues" evidence="9">
    <location>
        <begin position="991"/>
        <end position="1002"/>
    </location>
</feature>
<feature type="compositionally biased region" description="Basic and acidic residues" evidence="9">
    <location>
        <begin position="1025"/>
        <end position="1049"/>
    </location>
</feature>
<feature type="active site" description="Proton acceptor" evidence="4 8">
    <location>
        <position position="746"/>
    </location>
</feature>
<feature type="binding site" evidence="4">
    <location>
        <begin position="627"/>
        <end position="635"/>
    </location>
    <ligand>
        <name>ATP</name>
        <dbReference type="ChEBI" id="CHEBI:30616"/>
    </ligand>
</feature>
<feature type="binding site" evidence="4">
    <location>
        <position position="653"/>
    </location>
    <ligand>
        <name>ATP</name>
        <dbReference type="ChEBI" id="CHEBI:30616"/>
    </ligand>
</feature>
<feature type="site" description="Cleavage; by a metalloproteinase" evidence="2">
    <location>
        <begin position="535"/>
        <end position="536"/>
    </location>
</feature>
<feature type="site" description="Cleavage; by gamma-secretase/PS1" evidence="2">
    <location>
        <begin position="561"/>
        <end position="562"/>
    </location>
</feature>
<feature type="glycosylation site" description="N-linked (GlcNAc...) asparagine" evidence="3">
    <location>
        <position position="265"/>
    </location>
</feature>
<feature type="glycosylation site" description="N-linked (GlcNAc...) asparagine" evidence="3">
    <location>
        <position position="336"/>
    </location>
</feature>
<feature type="glycosylation site" description="N-linked (GlcNAc...) asparagine" evidence="3">
    <location>
        <position position="428"/>
    </location>
</feature>
<feature type="glycosylation site" description="N-linked (GlcNAc...) asparagine" evidence="3">
    <location>
        <position position="482"/>
    </location>
</feature>
<feature type="disulfide bond" evidence="13">
    <location>
        <begin position="62"/>
        <end position="184"/>
    </location>
</feature>
<feature type="disulfide bond" evidence="13">
    <location>
        <begin position="97"/>
        <end position="107"/>
    </location>
</feature>
<feature type="cross-link" description="Glycyl lysine isopeptide (Lys-Gly) (interchain with G-Cter in ubiquitin)" evidence="16">
    <location>
        <position position="891"/>
    </location>
</feature>
<feature type="splice variant" id="VSP_015713" description="In isoform 3." evidence="22">
    <original>R</original>
    <variation>RR</variation>
    <location>
        <position position="568"/>
    </location>
</feature>
<feature type="splice variant" id="VSP_003016" description="In isoform 2 and isoform 3." evidence="18 19 20 21 22">
    <original>G</original>
    <variation>V</variation>
    <location>
        <position position="986"/>
    </location>
</feature>
<feature type="splice variant" id="VSP_003017" description="In isoform 2 and isoform 3." evidence="18 19 20 21 22">
    <location>
        <begin position="987"/>
        <end position="1055"/>
    </location>
</feature>
<feature type="sequence variant" id="VAR_032853" description="In prostate cancer; dbSNP:rs201754821." evidence="10">
    <original>R</original>
    <variation>H</variation>
    <location>
        <position position="199"/>
    </location>
</feature>
<feature type="sequence variant" id="VAR_032854" description="In prostate cancer; dbSNP:rs35882952." evidence="10 11 12">
    <original>A</original>
    <variation>S</variation>
    <location>
        <position position="279"/>
    </location>
</feature>
<feature type="sequence variant" id="VAR_042172" evidence="12">
    <original>C</original>
    <variation>G</variation>
    <location>
        <position position="289"/>
    </location>
</feature>
<feature type="sequence variant" id="VAR_042173" description="In dbSNP:rs56180036." evidence="12">
    <original>I</original>
    <variation>V</variation>
    <location>
        <position position="361"/>
    </location>
</feature>
<feature type="sequence variant" id="VAR_032855" description="In prostate cancer; dbSNP:rs142173175." evidence="11">
    <original>V</original>
    <variation>A</variation>
    <location>
        <position position="650"/>
    </location>
</feature>
<feature type="sequence variant" id="VAR_042174" description="In dbSNP:rs28936395." evidence="12">
    <original>D</original>
    <variation>N</variation>
    <location>
        <position position="678"/>
    </location>
</feature>
<feature type="sequence variant" id="VAR_032856" description="In prostate cancer." evidence="10">
    <original>H</original>
    <variation>N</variation>
    <location>
        <position position="679"/>
    </location>
</feature>
<feature type="sequence variant" id="VAR_082702" description="In BDPLT22; dbSNP:rs761749948." evidence="15">
    <original>R</original>
    <variation>C</variation>
    <location>
        <position position="745"/>
    </location>
</feature>
<feature type="sequence variant" id="VAR_042175" description="In dbSNP:rs55826626." evidence="12">
    <original>R</original>
    <variation>W</variation>
    <location>
        <position position="844"/>
    </location>
</feature>
<feature type="sequence variant" id="VAR_032857" description="In prostate cancer; dbSNP:rs372653137." evidence="11">
    <original>M</original>
    <variation>V</variation>
    <location>
        <position position="883"/>
    </location>
</feature>
<feature type="sequence variant" id="VAR_032858" description="In prostate cancer." evidence="10">
    <original>I</original>
    <variation>M</variation>
    <location>
        <position position="909"/>
    </location>
</feature>
<feature type="mutagenesis site" description="No loss of ubiquitination by RNF186." evidence="16">
    <original>K</original>
    <variation>R</variation>
    <location>
        <position position="787"/>
    </location>
</feature>
<feature type="mutagenesis site" description="Complete loss of ubiquitination by RNF186." evidence="16">
    <original>K</original>
    <variation>R</variation>
    <location>
        <position position="891"/>
    </location>
</feature>
<feature type="sequence conflict" description="In Ref. 1; BAA06506." evidence="23" ref="1">
    <original>MALRRLGAALLLLPLLAAVE</original>
    <variation>MWVPVLALPVCTYA</variation>
    <location>
        <begin position="1"/>
        <end position="20"/>
    </location>
</feature>
<feature type="sequence conflict" description="In Ref. 1; BAA06506." evidence="23" ref="1">
    <original>G</original>
    <variation>D</variation>
    <location>
        <position position="154"/>
    </location>
</feature>
<feature type="sequence conflict" description="In Ref. 1; BAA06506." evidence="23" ref="1">
    <original>K</original>
    <variation>KQ</variation>
    <location>
        <position position="476"/>
    </location>
</feature>
<feature type="sequence conflict" description="In Ref. 5; AAA74244." evidence="23" ref="5">
    <location>
        <begin position="495"/>
        <end position="496"/>
    </location>
</feature>
<feature type="sequence conflict" description="In Ref. 1; BAA06506." evidence="23" ref="1">
    <original>E</original>
    <variation>D</variation>
    <location>
        <position position="532"/>
    </location>
</feature>
<feature type="sequence conflict" description="In Ref. 5; AAA74244." evidence="23" ref="5">
    <original>M</original>
    <variation>I</variation>
    <location>
        <position position="589"/>
    </location>
</feature>
<feature type="sequence conflict" description="In Ref. 7; BAA03537." evidence="23" ref="7">
    <original>A</original>
    <variation>R</variation>
    <location>
        <position position="671"/>
    </location>
</feature>
<feature type="sequence conflict" description="In Ref. 5; AAA74244." evidence="23" ref="5">
    <original>I</original>
    <variation>F</variation>
    <location>
        <position position="788"/>
    </location>
</feature>
<feature type="sequence conflict" description="In Ref. 1; BAA06506, 6; BAA07073 and 7; BAA03537." evidence="23" ref="1 6 7">
    <original>S</original>
    <variation>A</variation>
    <location>
        <position position="853"/>
    </location>
</feature>
<feature type="sequence conflict" description="In Ref. 1; BAA06506, 6; BAA07073 and 7; BAA03537." evidence="23" ref="1 6 7">
    <original>E</original>
    <variation>K</variation>
    <location>
        <position position="923"/>
    </location>
</feature>
<feature type="sequence conflict" description="In Ref. 2; AAA99310." evidence="23" ref="2">
    <original>V</original>
    <variation>L</variation>
    <location>
        <position position="958"/>
    </location>
</feature>
<feature type="strand" evidence="27">
    <location>
        <begin position="21"/>
        <end position="25"/>
    </location>
</feature>
<feature type="helix" evidence="27">
    <location>
        <begin position="26"/>
        <end position="28"/>
    </location>
</feature>
<feature type="strand" evidence="27">
    <location>
        <begin position="36"/>
        <end position="39"/>
    </location>
</feature>
<feature type="strand" evidence="27">
    <location>
        <begin position="44"/>
        <end position="49"/>
    </location>
</feature>
<feature type="strand" evidence="27">
    <location>
        <begin position="55"/>
        <end position="61"/>
    </location>
</feature>
<feature type="strand" evidence="27">
    <location>
        <begin position="66"/>
        <end position="68"/>
    </location>
</feature>
<feature type="strand" evidence="27">
    <location>
        <begin position="71"/>
        <end position="74"/>
    </location>
</feature>
<feature type="strand" evidence="27">
    <location>
        <begin position="84"/>
        <end position="94"/>
    </location>
</feature>
<feature type="helix" evidence="27">
    <location>
        <begin position="97"/>
        <end position="99"/>
    </location>
</feature>
<feature type="strand" evidence="27">
    <location>
        <begin position="111"/>
        <end position="120"/>
    </location>
</feature>
<feature type="strand" evidence="27">
    <location>
        <begin position="130"/>
        <end position="132"/>
    </location>
</feature>
<feature type="strand" evidence="27">
    <location>
        <begin position="135"/>
        <end position="141"/>
    </location>
</feature>
<feature type="strand" evidence="27">
    <location>
        <begin position="148"/>
        <end position="152"/>
    </location>
</feature>
<feature type="strand" evidence="27">
    <location>
        <begin position="155"/>
        <end position="166"/>
    </location>
</feature>
<feature type="strand" evidence="27">
    <location>
        <begin position="171"/>
        <end position="183"/>
    </location>
</feature>
<feature type="strand" evidence="27">
    <location>
        <begin position="185"/>
        <end position="194"/>
    </location>
</feature>
<feature type="helix" evidence="28">
    <location>
        <begin position="618"/>
        <end position="620"/>
    </location>
</feature>
<feature type="strand" evidence="28">
    <location>
        <begin position="621"/>
        <end position="626"/>
    </location>
</feature>
<feature type="strand" evidence="28">
    <location>
        <begin position="635"/>
        <end position="640"/>
    </location>
</feature>
<feature type="strand" evidence="28">
    <location>
        <begin position="648"/>
        <end position="655"/>
    </location>
</feature>
<feature type="helix" evidence="28">
    <location>
        <begin position="661"/>
        <end position="674"/>
    </location>
</feature>
<feature type="strand" evidence="28">
    <location>
        <begin position="685"/>
        <end position="689"/>
    </location>
</feature>
<feature type="strand" evidence="28">
    <location>
        <begin position="691"/>
        <end position="700"/>
    </location>
</feature>
<feature type="helix" evidence="28">
    <location>
        <begin position="707"/>
        <end position="712"/>
    </location>
</feature>
<feature type="turn" evidence="28">
    <location>
        <begin position="713"/>
        <end position="716"/>
    </location>
</feature>
<feature type="helix" evidence="28">
    <location>
        <begin position="720"/>
        <end position="739"/>
    </location>
</feature>
<feature type="helix" evidence="28">
    <location>
        <begin position="749"/>
        <end position="751"/>
    </location>
</feature>
<feature type="strand" evidence="28">
    <location>
        <begin position="752"/>
        <end position="754"/>
    </location>
</feature>
<feature type="strand" evidence="28">
    <location>
        <begin position="760"/>
        <end position="762"/>
    </location>
</feature>
<feature type="helix" evidence="28">
    <location>
        <begin position="790"/>
        <end position="792"/>
    </location>
</feature>
<feature type="helix" evidence="28">
    <location>
        <begin position="795"/>
        <end position="800"/>
    </location>
</feature>
<feature type="helix" evidence="28">
    <location>
        <begin position="805"/>
        <end position="820"/>
    </location>
</feature>
<feature type="turn" evidence="28">
    <location>
        <begin position="826"/>
        <end position="829"/>
    </location>
</feature>
<feature type="helix" evidence="28">
    <location>
        <begin position="832"/>
        <end position="840"/>
    </location>
</feature>
<feature type="helix" evidence="28">
    <location>
        <begin position="853"/>
        <end position="862"/>
    </location>
</feature>
<feature type="helix" evidence="28">
    <location>
        <begin position="873"/>
        <end position="885"/>
    </location>
</feature>
<feature type="helix" evidence="28">
    <location>
        <begin position="887"/>
        <end position="890"/>
    </location>
</feature>
<feature type="helix" evidence="26">
    <location>
        <begin position="918"/>
        <end position="924"/>
    </location>
</feature>
<feature type="helix" evidence="26">
    <location>
        <begin position="928"/>
        <end position="930"/>
    </location>
</feature>
<feature type="helix" evidence="26">
    <location>
        <begin position="931"/>
        <end position="936"/>
    </location>
</feature>
<feature type="helix" evidence="26">
    <location>
        <begin position="942"/>
        <end position="945"/>
    </location>
</feature>
<feature type="helix" evidence="26">
    <location>
        <begin position="950"/>
        <end position="955"/>
    </location>
</feature>
<feature type="helix" evidence="26">
    <location>
        <begin position="961"/>
        <end position="982"/>
    </location>
</feature>
<feature type="helix" evidence="29">
    <location>
        <begin position="1050"/>
        <end position="1052"/>
    </location>
</feature>
<feature type="modified residue" description="Phosphoserine" evidence="25">
    <location sequence="P29323-2">
        <position position="983"/>
    </location>
</feature>
<feature type="modified residue" description="Phosphoserine" evidence="25">
    <location sequence="P29323-3">
        <position position="984"/>
    </location>
</feature>
<organism>
    <name type="scientific">Homo sapiens</name>
    <name type="common">Human</name>
    <dbReference type="NCBI Taxonomy" id="9606"/>
    <lineage>
        <taxon>Eukaryota</taxon>
        <taxon>Metazoa</taxon>
        <taxon>Chordata</taxon>
        <taxon>Craniata</taxon>
        <taxon>Vertebrata</taxon>
        <taxon>Euteleostomi</taxon>
        <taxon>Mammalia</taxon>
        <taxon>Eutheria</taxon>
        <taxon>Euarchontoglires</taxon>
        <taxon>Primates</taxon>
        <taxon>Haplorrhini</taxon>
        <taxon>Catarrhini</taxon>
        <taxon>Hominidae</taxon>
        <taxon>Homo</taxon>
    </lineage>
</organism>
<keyword id="KW-0002">3D-structure</keyword>
<keyword id="KW-0025">Alternative splicing</keyword>
<keyword id="KW-0067">ATP-binding</keyword>
<keyword id="KW-1003">Cell membrane</keyword>
<keyword id="KW-0966">Cell projection</keyword>
<keyword id="KW-0217">Developmental protein</keyword>
<keyword id="KW-0225">Disease variant</keyword>
<keyword id="KW-1015">Disulfide bond</keyword>
<keyword id="KW-0325">Glycoprotein</keyword>
<keyword id="KW-1017">Isopeptide bond</keyword>
<keyword id="KW-0418">Kinase</keyword>
<keyword id="KW-0472">Membrane</keyword>
<keyword id="KW-0524">Neurogenesis</keyword>
<keyword id="KW-0547">Nucleotide-binding</keyword>
<keyword id="KW-0597">Phosphoprotein</keyword>
<keyword id="KW-1267">Proteomics identification</keyword>
<keyword id="KW-0675">Receptor</keyword>
<keyword id="KW-1185">Reference proteome</keyword>
<keyword id="KW-0677">Repeat</keyword>
<keyword id="KW-0732">Signal</keyword>
<keyword id="KW-0808">Transferase</keyword>
<keyword id="KW-0812">Transmembrane</keyword>
<keyword id="KW-1133">Transmembrane helix</keyword>
<keyword id="KW-0043">Tumor suppressor</keyword>
<keyword id="KW-0829">Tyrosine-protein kinase</keyword>
<keyword id="KW-0832">Ubl conjugation</keyword>
<name>EPHB2_HUMAN</name>
<gene>
    <name type="primary">EPHB2</name>
    <name type="synonym">DRT</name>
    <name type="synonym">EPHT3</name>
    <name type="synonym">EPTH3</name>
    <name type="synonym">ERK</name>
    <name type="synonym">HEK5</name>
    <name type="synonym">TYRO5</name>
</gene>
<sequence>MALRRLGAALLLLPLLAAVEETLMDSTTATAELGWMVHPPSGWEEVSGYDENMNTIRTYQVCNVFESSQNNWLRTKFIRRRGAHRIHVEMKFSVRDCSSIPSVPGSCKETFNLYYYEADFDSATKTFPNWMENPWVKVDTIAADESFSQVDLGGRVMKINTEVRSFGPVSRSGFYLAFQDYGGCMSLIAVRVFYRKCPRIIQNGAIFQETLSGAESTSLVAARGSCIANAEEVDVPIKLYCNGDGEWLVPIGRCMCKAGFEAVENGTVCRGCPSGTFKANQGDEACTHCPINSRTTSEGATNCVCRNGYYRADLDPLDMPCTTIPSAPQAVISSVNETSLMLEWTPPRDSGGREDLVYNIICKSCGSGRGACTRCGDNVQYAPRQLGLTEPRIYISDLLAHTQYTFEIQAVNGVTDQSPFSPQFASVNITTNQAAPSAVSIMHQVSRTVDSITLSWSQPDQPNGVILDYELQYYEKELSEYNATAIKSPTNTVTVQGLKAGAIYVFQVRARTVAGYGRYSGKMYFQTMTEAEYQTSIQEKLPLIIGSSAAGLVFLIAVVVIAIVCNRRGFERADSEYTDKLQHYTSGHMTPGMKIYIDPFTYEDPNEAVREFAKEIDISCVKIEQVIGAGEFGEVCSGHLKLPGKREIFVAIKTLKSGYTEKQRRDFLSEASIMGQFDHPNVIHLEGVVTKSTPVMIITEFMENGSLDSFLRQNDGQFTVIQLVGMLRGIAAGMKYLADMNYVHRDLAARNILVNSNLVCKVSDFGLSRFLEDDTSDPTYTSALGGKIPIRWTAPEAIQYRKFTSASDVWSYGIVMWEVMSYGERPYWDMTNQDVINAIEQDYRLPPPMDCPSALHQLMLDCWQKDRNHRPKFGQIVNTLDKMIRNPNSLKAMAPLSSGINLPLLDRTIPDYTSFNTVDEWLEAIKMGQYKESFANAGFTSFDVVSQMMMEDILRVGVTLAGHQKKILNSIQVMRAQMNQIQSVEGQPLARRPRATGRTKRCQPRDVTKKTCNSNDGKKKGMGKKKTDPGRGREIQGIFFKEDSHKESNDCSCGG</sequence>
<reference key="1">
    <citation type="journal article" date="1994" name="Cancer Res.">
        <title>Overexpression of ERK, an EPH family receptor protein tyrosine kinase, in various human tumors.</title>
        <authorList>
            <person name="Kiyokawa E."/>
            <person name="Takai S."/>
            <person name="Tanaka M."/>
            <person name="Iwase T."/>
            <person name="Suzuki M."/>
            <person name="Xiang Y.Y."/>
            <person name="Naito Y."/>
            <person name="Yamada K."/>
            <person name="Sugimura H."/>
            <person name="Kino I."/>
        </authorList>
    </citation>
    <scope>NUCLEOTIDE SEQUENCE [MRNA] (ISOFORM 2)</scope>
</reference>
<reference key="2">
    <citation type="journal article" date="1995" name="Hum. Mol. Genet.">
        <title>Molecular characterization and chromosomal localization of DRT (EPHT3): a developmentally regulated human protein-tyrosine kinase gene of the EPH family.</title>
        <authorList>
            <person name="Ikegaki N."/>
            <person name="Tang X.X."/>
            <person name="Liu X.-G."/>
            <person name="Biegel J.A."/>
            <person name="Allen C."/>
            <person name="Yoshioka A."/>
            <person name="Sulman E.P."/>
            <person name="Brodeur G.M."/>
            <person name="Pleasure D.E."/>
        </authorList>
    </citation>
    <scope>NUCLEOTIDE SEQUENCE [MRNA] (ISOFORM 3)</scope>
    <source>
        <tissue>Fetal brain</tissue>
    </source>
</reference>
<reference key="3">
    <citation type="journal article" date="1998" name="Oncogene">
        <title>A variant transcript encoding an isoform of the human protein tyrosine kinase EPHB2 is generated by alternative splicing and alternative use of polyadenylation signals.</title>
        <authorList>
            <person name="Tang X.X."/>
            <person name="Pleasure D.E."/>
            <person name="Brodeur G.M."/>
            <person name="Ikegaki N."/>
        </authorList>
    </citation>
    <scope>NUCLEOTIDE SEQUENCE [MRNA] (ISOFORM 1)</scope>
    <source>
        <tissue>Fetal brain</tissue>
    </source>
</reference>
<reference key="4">
    <citation type="journal article" date="2006" name="Nature">
        <title>The DNA sequence and biological annotation of human chromosome 1.</title>
        <authorList>
            <person name="Gregory S.G."/>
            <person name="Barlow K.F."/>
            <person name="McLay K.E."/>
            <person name="Kaul R."/>
            <person name="Swarbreck D."/>
            <person name="Dunham A."/>
            <person name="Scott C.E."/>
            <person name="Howe K.L."/>
            <person name="Woodfine K."/>
            <person name="Spencer C.C.A."/>
            <person name="Jones M.C."/>
            <person name="Gillson C."/>
            <person name="Searle S."/>
            <person name="Zhou Y."/>
            <person name="Kokocinski F."/>
            <person name="McDonald L."/>
            <person name="Evans R."/>
            <person name="Phillips K."/>
            <person name="Atkinson A."/>
            <person name="Cooper R."/>
            <person name="Jones C."/>
            <person name="Hall R.E."/>
            <person name="Andrews T.D."/>
            <person name="Lloyd C."/>
            <person name="Ainscough R."/>
            <person name="Almeida J.P."/>
            <person name="Ambrose K.D."/>
            <person name="Anderson F."/>
            <person name="Andrew R.W."/>
            <person name="Ashwell R.I.S."/>
            <person name="Aubin K."/>
            <person name="Babbage A.K."/>
            <person name="Bagguley C.L."/>
            <person name="Bailey J."/>
            <person name="Beasley H."/>
            <person name="Bethel G."/>
            <person name="Bird C.P."/>
            <person name="Bray-Allen S."/>
            <person name="Brown J.Y."/>
            <person name="Brown A.J."/>
            <person name="Buckley D."/>
            <person name="Burton J."/>
            <person name="Bye J."/>
            <person name="Carder C."/>
            <person name="Chapman J.C."/>
            <person name="Clark S.Y."/>
            <person name="Clarke G."/>
            <person name="Clee C."/>
            <person name="Cobley V."/>
            <person name="Collier R.E."/>
            <person name="Corby N."/>
            <person name="Coville G.J."/>
            <person name="Davies J."/>
            <person name="Deadman R."/>
            <person name="Dunn M."/>
            <person name="Earthrowl M."/>
            <person name="Ellington A.G."/>
            <person name="Errington H."/>
            <person name="Frankish A."/>
            <person name="Frankland J."/>
            <person name="French L."/>
            <person name="Garner P."/>
            <person name="Garnett J."/>
            <person name="Gay L."/>
            <person name="Ghori M.R.J."/>
            <person name="Gibson R."/>
            <person name="Gilby L.M."/>
            <person name="Gillett W."/>
            <person name="Glithero R.J."/>
            <person name="Grafham D.V."/>
            <person name="Griffiths C."/>
            <person name="Griffiths-Jones S."/>
            <person name="Grocock R."/>
            <person name="Hammond S."/>
            <person name="Harrison E.S.I."/>
            <person name="Hart E."/>
            <person name="Haugen E."/>
            <person name="Heath P.D."/>
            <person name="Holmes S."/>
            <person name="Holt K."/>
            <person name="Howden P.J."/>
            <person name="Hunt A.R."/>
            <person name="Hunt S.E."/>
            <person name="Hunter G."/>
            <person name="Isherwood J."/>
            <person name="James R."/>
            <person name="Johnson C."/>
            <person name="Johnson D."/>
            <person name="Joy A."/>
            <person name="Kay M."/>
            <person name="Kershaw J.K."/>
            <person name="Kibukawa M."/>
            <person name="Kimberley A.M."/>
            <person name="King A."/>
            <person name="Knights A.J."/>
            <person name="Lad H."/>
            <person name="Laird G."/>
            <person name="Lawlor S."/>
            <person name="Leongamornlert D.A."/>
            <person name="Lloyd D.M."/>
            <person name="Loveland J."/>
            <person name="Lovell J."/>
            <person name="Lush M.J."/>
            <person name="Lyne R."/>
            <person name="Martin S."/>
            <person name="Mashreghi-Mohammadi M."/>
            <person name="Matthews L."/>
            <person name="Matthews N.S.W."/>
            <person name="McLaren S."/>
            <person name="Milne S."/>
            <person name="Mistry S."/>
            <person name="Moore M.J.F."/>
            <person name="Nickerson T."/>
            <person name="O'Dell C.N."/>
            <person name="Oliver K."/>
            <person name="Palmeiri A."/>
            <person name="Palmer S.A."/>
            <person name="Parker A."/>
            <person name="Patel D."/>
            <person name="Pearce A.V."/>
            <person name="Peck A.I."/>
            <person name="Pelan S."/>
            <person name="Phelps K."/>
            <person name="Phillimore B.J."/>
            <person name="Plumb R."/>
            <person name="Rajan J."/>
            <person name="Raymond C."/>
            <person name="Rouse G."/>
            <person name="Saenphimmachak C."/>
            <person name="Sehra H.K."/>
            <person name="Sheridan E."/>
            <person name="Shownkeen R."/>
            <person name="Sims S."/>
            <person name="Skuce C.D."/>
            <person name="Smith M."/>
            <person name="Steward C."/>
            <person name="Subramanian S."/>
            <person name="Sycamore N."/>
            <person name="Tracey A."/>
            <person name="Tromans A."/>
            <person name="Van Helmond Z."/>
            <person name="Wall M."/>
            <person name="Wallis J.M."/>
            <person name="White S."/>
            <person name="Whitehead S.L."/>
            <person name="Wilkinson J.E."/>
            <person name="Willey D.L."/>
            <person name="Williams H."/>
            <person name="Wilming L."/>
            <person name="Wray P.W."/>
            <person name="Wu Z."/>
            <person name="Coulson A."/>
            <person name="Vaudin M."/>
            <person name="Sulston J.E."/>
            <person name="Durbin R.M."/>
            <person name="Hubbard T."/>
            <person name="Wooster R."/>
            <person name="Dunham I."/>
            <person name="Carter N.P."/>
            <person name="McVean G."/>
            <person name="Ross M.T."/>
            <person name="Harrow J."/>
            <person name="Olson M.V."/>
            <person name="Beck S."/>
            <person name="Rogers J."/>
            <person name="Bentley D.R."/>
        </authorList>
    </citation>
    <scope>NUCLEOTIDE SEQUENCE [LARGE SCALE GENOMIC DNA]</scope>
</reference>
<reference key="5">
    <citation type="journal article" date="1995" name="Oncogene">
        <title>cDNA cloning and tissue distribution of five human EPH-like receptor protein-tyrosine kinases.</title>
        <authorList>
            <person name="Fox G.M."/>
            <person name="Holst P.L."/>
            <person name="Chute H.T."/>
            <person name="Lindberg R.A."/>
            <person name="Janssen A.M."/>
            <person name="Basu R."/>
            <person name="Welcher A.A."/>
        </authorList>
    </citation>
    <scope>NUCLEOTIDE SEQUENCE [MRNA] OF 15-986 (ISOFORM 2)</scope>
    <source>
        <tissue>Brain</tissue>
    </source>
</reference>
<reference key="6">
    <citation type="journal article" date="1995" name="Genomics">
        <title>Identification of the human ERK gene as a putative receptor tyrosine kinase and its chromosomal localization to 1p36.1: a comparative mapping of human, mouse, and rat chromosomes.</title>
        <authorList>
            <person name="Saito T."/>
            <person name="Seki N."/>
            <person name="Matsuda Y."/>
            <person name="Kitahara M."/>
            <person name="Murata M."/>
            <person name="Kanda N."/>
            <person name="Nomura N."/>
            <person name="Yamamoto T."/>
            <person name="Hori T.-A."/>
        </authorList>
    </citation>
    <scope>NUCLEOTIDE SEQUENCE [MRNA] OF 509-986 (ISOFORM 2)</scope>
    <source>
        <tissue>Fetal brain</tissue>
    </source>
</reference>
<reference key="7">
    <citation type="journal article" date="1993" name="Biochem. Biophys. Res. Commun.">
        <title>Identification of protein-tyrosine kinase genes preferentially expressed in embryo stomach and gastric cancer.</title>
        <authorList>
            <person name="Iwase T."/>
            <person name="Tanaka M."/>
            <person name="Suzuki M."/>
            <person name="Naito Y."/>
            <person name="Sugimura H."/>
            <person name="Kino I."/>
        </authorList>
    </citation>
    <scope>NUCLEOTIDE SEQUENCE [MRNA] OF 640-986 (ISOFORM 2)</scope>
    <source>
        <tissue>Gastric carcinoma</tissue>
    </source>
</reference>
<reference key="8">
    <citation type="journal article" date="1991" name="Oncogene">
        <title>eek and erk, new members of the eph subclass of receptor protein-tyrosine kinases.</title>
        <authorList>
            <person name="Chan J."/>
            <person name="Watt V.M."/>
        </authorList>
    </citation>
    <scope>NUCLEOTIDE SEQUENCE [GENOMIC DNA] OF 652-712</scope>
</reference>
<reference key="9">
    <citation type="journal article" date="1997" name="Cell">
        <title>Unified nomenclature for Eph family receptors and their ligands, the ephrins.</title>
        <authorList>
            <consortium name="Eph nomenclature committee"/>
        </authorList>
    </citation>
    <scope>NOMENCLATURE</scope>
</reference>
<reference key="10">
    <citation type="journal article" date="1999" name="Int. J. Cancer">
        <title>Antigens recognized by autologous antibody in patients with renal-cell carcinoma.</title>
        <authorList>
            <person name="Scanlan M.J."/>
            <person name="Gordan J.D."/>
            <person name="Williamson B."/>
            <person name="Stockert E."/>
            <person name="Bander N.H."/>
            <person name="Jongeneel C.V."/>
            <person name="Gure A.O."/>
            <person name="Jaeger D."/>
            <person name="Jaeger E."/>
            <person name="Knuth A."/>
            <person name="Chen Y.-T."/>
            <person name="Old L.J."/>
        </authorList>
    </citation>
    <scope>IDENTIFICATION AS A RENAL CANCER ANTIGEN</scope>
    <source>
        <tissue>Renal cell carcinoma</tissue>
    </source>
</reference>
<reference key="11">
    <citation type="journal article" date="2008" name="Mol. Cell">
        <title>Kinase-selective enrichment enables quantitative phosphoproteomics of the kinome across the cell cycle.</title>
        <authorList>
            <person name="Daub H."/>
            <person name="Olsen J.V."/>
            <person name="Bairlein M."/>
            <person name="Gnad F."/>
            <person name="Oppermann F.S."/>
            <person name="Korner R."/>
            <person name="Greff Z."/>
            <person name="Keri G."/>
            <person name="Stemmann O."/>
            <person name="Mann M."/>
        </authorList>
    </citation>
    <scope>IDENTIFICATION BY MASS SPECTROMETRY [LARGE SCALE ANALYSIS]</scope>
    <source>
        <tissue>Cervix carcinoma</tissue>
    </source>
</reference>
<reference key="12">
    <citation type="journal article" date="2009" name="Mol. Cell. Proteomics">
        <title>Large-scale proteomics analysis of the human kinome.</title>
        <authorList>
            <person name="Oppermann F.S."/>
            <person name="Gnad F."/>
            <person name="Olsen J.V."/>
            <person name="Hornberger R."/>
            <person name="Greff Z."/>
            <person name="Keri G."/>
            <person name="Mann M."/>
            <person name="Daub H."/>
        </authorList>
    </citation>
    <scope>PHOSPHORYLATION [LARGE SCALE ANALYSIS] AT SER-983 (ISOFORM 2)</scope>
    <scope>PHOSPHORYLATION [LARGE SCALE ANALYSIS] AT SER-984 (ISOFORM 3)</scope>
    <scope>IDENTIFICATION BY MASS SPECTROMETRY [LARGE SCALE ANALYSIS]</scope>
</reference>
<reference key="13">
    <citation type="journal article" date="2017" name="Mol. Biol. Cell">
        <title>Ubiquitin ligase SPSB4 diminishes cell repulsive responses mediated by EphB2.</title>
        <authorList>
            <person name="Okumura F."/>
            <person name="Joo-Okumura A."/>
            <person name="Obara K."/>
            <person name="Petersen A."/>
            <person name="Nishikimi A."/>
            <person name="Fukui Y."/>
            <person name="Nakatsukasa K."/>
            <person name="Kamura T."/>
        </authorList>
    </citation>
    <scope>POLYUBIQUITINATION</scope>
    <scope>INTERACTION WITH SPSB1 AND SPSB4</scope>
</reference>
<reference key="14">
    <citation type="journal article" date="2021" name="Autophagy">
        <title>RNF186 regulates EFNB1 (ephrin B1)-EPHB2-induced autophagy in the colonic epithelial cells for the maintenance of intestinal homeostasis.</title>
        <authorList>
            <person name="Zhang H."/>
            <person name="Cui Z."/>
            <person name="Cheng D."/>
            <person name="Du Y."/>
            <person name="Guo X."/>
            <person name="Gao R."/>
            <person name="Chen J."/>
            <person name="Sun W."/>
            <person name="He R."/>
            <person name="Ma X."/>
            <person name="Peng Q."/>
            <person name="Martin B.N."/>
            <person name="Yan W."/>
            <person name="Rong Y."/>
            <person name="Wang C."/>
        </authorList>
    </citation>
    <scope>UBIQUITINATION BY RNF186</scope>
    <scope>MUTAGENESIS OF LYS-787 AND LYS-891</scope>
</reference>
<reference key="15">
    <citation type="journal article" date="1999" name="Science">
        <title>Oligomeric structure of the human EphB2 receptor SAM domain.</title>
        <authorList>
            <person name="Thanos C.D."/>
            <person name="Goodwill K.E."/>
            <person name="Bowie J.U."/>
        </authorList>
    </citation>
    <scope>X-RAY CRYSTALLOGRAPHY (1.95 ANGSTROMS) OF 910-986 (ISOFORM SHORT)</scope>
</reference>
<reference key="16">
    <citation type="journal article" date="2007" name="J. Biol. Chem.">
        <title>Three-dimensional structure of the EphB2 receptor in complex with an antagonistic peptide reveals a novel mode of inhibition.</title>
        <authorList>
            <person name="Chrencik J.E."/>
            <person name="Brooun A."/>
            <person name="Recht M.I."/>
            <person name="Nicola G."/>
            <person name="Davis L.K."/>
            <person name="Abagyan R."/>
            <person name="Widmer H."/>
            <person name="Pasquale E.B."/>
            <person name="Kuhn P."/>
        </authorList>
    </citation>
    <scope>X-RAY CRYSTALLOGRAPHY (2.30 ANGSTROMS) OF 20-195 OF HOMODIMER IN COMPLEX WITH ANTAGONISTIC PEPTIDE</scope>
    <scope>DISULFIDE BOND</scope>
    <scope>SUBUNIT</scope>
</reference>
<reference evidence="24" key="17">
    <citation type="journal article" date="2023" name="Mol. Cell">
        <title>E3 ligase autoinhibition by C-degron mimicry maintains C-degron substrate fidelity.</title>
        <authorList>
            <person name="Scott D.C."/>
            <person name="King M.T."/>
            <person name="Baek K."/>
            <person name="Gee C.T."/>
            <person name="Kalathur R."/>
            <person name="Li J."/>
            <person name="Purser N."/>
            <person name="Nourse A."/>
            <person name="Chai S.C."/>
            <person name="Vaithiyalingam S."/>
            <person name="Chen T."/>
            <person name="Lee R.E."/>
            <person name="Elledge S.J."/>
            <person name="Kleiger G."/>
            <person name="Schulman B.A."/>
        </authorList>
    </citation>
    <scope>X-RAY CRYSTALLOGRAPHY (1.37 ANGSTROMS) OF 1042-1055 IN COMPLEX WITH KLHDC2; ELOB AND ELOC</scope>
    <scope>UBIQUITINATION BY CRL2(KLHDC2) E3 LIGASE COMPLEX</scope>
</reference>
<reference key="18">
    <citation type="journal article" date="2004" name="Nat. Genet.">
        <title>Nonsense-mediated decay microarray analysis identifies mutations of EPHB2 in human prostate cancer.</title>
        <authorList>
            <person name="Huusko P."/>
            <person name="Ponciano-Jackson D."/>
            <person name="Wolf M."/>
            <person name="Kiefer J.A."/>
            <person name="Azorsa D.O."/>
            <person name="Tuzmen S."/>
            <person name="Weaver D."/>
            <person name="Robbins C."/>
            <person name="Moses T."/>
            <person name="Allinen M."/>
            <person name="Hautaniemi S."/>
            <person name="Chen Y."/>
            <person name="Elkahloun A."/>
            <person name="Basik M."/>
            <person name="Bova G.S."/>
            <person name="Bubendorf L."/>
            <person name="Lugli A."/>
            <person name="Sauter G."/>
            <person name="Schleutker J."/>
            <person name="Ozcelik H."/>
            <person name="Elowe S."/>
            <person name="Pawson T."/>
            <person name="Trent J.M."/>
            <person name="Carpten J.D."/>
            <person name="Kallioniemi O.-P."/>
            <person name="Mousses S."/>
        </authorList>
    </citation>
    <scope>VARIANTS PROSTATE CANCER HIS-199; SER-279; ASN-679 AND MET-909</scope>
    <scope>FUNCTION AS A TUMOR SUPPRESSOR</scope>
</reference>
<reference key="19">
    <citation type="journal article" date="2006" name="J. Med. Genet.">
        <title>A common nonsense mutation in EphB2 is associated with prostate cancer risk in African American men with a positive family history.</title>
        <authorList>
            <person name="Kittles R.A."/>
            <person name="Baffoe-Bonnie A.B."/>
            <person name="Moses T.Y."/>
            <person name="Robbins C.M."/>
            <person name="Ahaghotu C."/>
            <person name="Huusko P."/>
            <person name="Pettaway C."/>
            <person name="Vijayakumar S."/>
            <person name="Bennett J."/>
            <person name="Hoke G."/>
            <person name="Mason T."/>
            <person name="Weinrich S."/>
            <person name="Trent J.M."/>
            <person name="Collins F.S."/>
            <person name="Mousses S."/>
            <person name="Bailey-Wilson J."/>
            <person name="Furbert-Harris P."/>
            <person name="Dunston G."/>
            <person name="Powell I.J."/>
            <person name="Carpten J.D."/>
        </authorList>
    </citation>
    <scope>VARIANTS PROSTATE CANCER SER-279; ALA-650 AND VAL-883</scope>
</reference>
<reference key="20">
    <citation type="journal article" date="2007" name="Nature">
        <title>Patterns of somatic mutation in human cancer genomes.</title>
        <authorList>
            <person name="Greenman C."/>
            <person name="Stephens P."/>
            <person name="Smith R."/>
            <person name="Dalgliesh G.L."/>
            <person name="Hunter C."/>
            <person name="Bignell G."/>
            <person name="Davies H."/>
            <person name="Teague J."/>
            <person name="Butler A."/>
            <person name="Stevens C."/>
            <person name="Edkins S."/>
            <person name="O'Meara S."/>
            <person name="Vastrik I."/>
            <person name="Schmidt E.E."/>
            <person name="Avis T."/>
            <person name="Barthorpe S."/>
            <person name="Bhamra G."/>
            <person name="Buck G."/>
            <person name="Choudhury B."/>
            <person name="Clements J."/>
            <person name="Cole J."/>
            <person name="Dicks E."/>
            <person name="Forbes S."/>
            <person name="Gray K."/>
            <person name="Halliday K."/>
            <person name="Harrison R."/>
            <person name="Hills K."/>
            <person name="Hinton J."/>
            <person name="Jenkinson A."/>
            <person name="Jones D."/>
            <person name="Menzies A."/>
            <person name="Mironenko T."/>
            <person name="Perry J."/>
            <person name="Raine K."/>
            <person name="Richardson D."/>
            <person name="Shepherd R."/>
            <person name="Small A."/>
            <person name="Tofts C."/>
            <person name="Varian J."/>
            <person name="Webb T."/>
            <person name="West S."/>
            <person name="Widaa S."/>
            <person name="Yates A."/>
            <person name="Cahill D.P."/>
            <person name="Louis D.N."/>
            <person name="Goldstraw P."/>
            <person name="Nicholson A.G."/>
            <person name="Brasseur F."/>
            <person name="Looijenga L."/>
            <person name="Weber B.L."/>
            <person name="Chiew Y.-E."/>
            <person name="DeFazio A."/>
            <person name="Greaves M.F."/>
            <person name="Green A.R."/>
            <person name="Campbell P."/>
            <person name="Birney E."/>
            <person name="Easton D.F."/>
            <person name="Chenevix-Trench G."/>
            <person name="Tan M.-H."/>
            <person name="Khoo S.K."/>
            <person name="Teh B.T."/>
            <person name="Yuen S.T."/>
            <person name="Leung S.Y."/>
            <person name="Wooster R."/>
            <person name="Futreal P.A."/>
            <person name="Stratton M.R."/>
        </authorList>
    </citation>
    <scope>VARIANTS [LARGE SCALE ANALYSIS] SER-279; GLY-289; VAL-361; ASN-678 AND TRP-844</scope>
</reference>
<reference key="21">
    <citation type="journal article" date="2018" name="Blood">
        <title>A mutation of the human EPHB2 gene leads to a major platelet functional defect.</title>
        <authorList>
            <person name="Berrou E."/>
            <person name="Soukaseum C."/>
            <person name="Favier R."/>
            <person name="Adam F."/>
            <person name="Elaib Z."/>
            <person name="Kauskot A."/>
            <person name="Bordet J.C."/>
            <person name="Ballerini P."/>
            <person name="Loyau S."/>
            <person name="Feng M."/>
            <person name="Dias K."/>
            <person name="Muheidli A."/>
            <person name="Girault S."/>
            <person name="Nurden A.T."/>
            <person name="Turro E."/>
            <person name="Ouwehand W.H."/>
            <person name="Denis C.V."/>
            <person name="Jandrot-Perrus M."/>
            <person name="Rosa J.P."/>
            <person name="Nurden P."/>
            <person name="Bryckaert M."/>
        </authorList>
    </citation>
    <scope>VARIANT BDPLT22 CYS-745</scope>
    <scope>INVOLVEMENT IN BDPLT22</scope>
    <scope>FUNCTION</scope>
</reference>
<protein>
    <recommendedName>
        <fullName>Ephrin type-B receptor 2</fullName>
        <ecNumber>2.7.10.1</ecNumber>
    </recommendedName>
    <alternativeName>
        <fullName>Developmentally-regulated Eph-related tyrosine kinase</fullName>
    </alternativeName>
    <alternativeName>
        <fullName>ELK-related tyrosine kinase</fullName>
    </alternativeName>
    <alternativeName>
        <fullName>EPH tyrosine kinase 3</fullName>
    </alternativeName>
    <alternativeName>
        <fullName>EPH-like kinase 5</fullName>
        <shortName>EK5</shortName>
        <shortName>hEK5</shortName>
    </alternativeName>
    <alternativeName>
        <fullName>Renal carcinoma antigen NY-REN-47</fullName>
    </alternativeName>
    <alternativeName>
        <fullName>Tyrosine-protein kinase TYRO5</fullName>
    </alternativeName>
    <alternativeName>
        <fullName>Tyrosine-protein kinase receptor EPH-3</fullName>
    </alternativeName>
    <component>
        <recommendedName>
            <fullName evidence="2">EphB2/CTF1</fullName>
        </recommendedName>
    </component>
    <component>
        <recommendedName>
            <fullName evidence="2">EphB2/CTF2</fullName>
        </recommendedName>
    </component>
</protein>